<keyword id="KW-0929">Antimicrobial</keyword>
<keyword id="KW-0081">Bacteriolytic enzyme</keyword>
<keyword id="KW-0966">Cell projection</keyword>
<keyword id="KW-0969">Cilium</keyword>
<keyword id="KW-1015">Disulfide bond</keyword>
<keyword id="KW-0278">Fertilization</keyword>
<keyword id="KW-0282">Flagellum</keyword>
<keyword id="KW-0325">Glycoprotein</keyword>
<keyword id="KW-0326">Glycosidase</keyword>
<keyword id="KW-0378">Hydrolase</keyword>
<keyword id="KW-1185">Reference proteome</keyword>
<keyword id="KW-0964">Secreted</keyword>
<keyword id="KW-0732">Signal</keyword>
<name>LYZL6_MOUSE</name>
<protein>
    <recommendedName>
        <fullName>Lysozyme-like protein 6</fullName>
        <ecNumber>3.2.1.17</ecNumber>
    </recommendedName>
</protein>
<evidence type="ECO:0000250" key="1">
    <source>
        <dbReference type="UniProtKB" id="O75951"/>
    </source>
</evidence>
<evidence type="ECO:0000255" key="2"/>
<evidence type="ECO:0000255" key="3">
    <source>
        <dbReference type="PROSITE-ProRule" id="PRU00680"/>
    </source>
</evidence>
<evidence type="ECO:0000269" key="4">
    <source>
    </source>
</evidence>
<evidence type="ECO:0000305" key="5"/>
<sequence length="148" mass="16818">MLKALFICVASCLLVVNDGNIIHRCSLAKILYEEDLDGFEGYSLPDWLCLAFVESNFNISKVNENVDGSFDYGIFQINSRYWCNDYQSHSENFCHVDCQELLSPNLISTIHCAKKIVSGPGGMKNWVEWKLHCLGRPLSYWMTGCHLG</sequence>
<dbReference type="EC" id="3.2.1.17"/>
<dbReference type="EMBL" id="AY566284">
    <property type="protein sequence ID" value="AAS68631.1"/>
    <property type="molecule type" value="mRNA"/>
</dbReference>
<dbReference type="EMBL" id="AK006279">
    <property type="protein sequence ID" value="BAB24499.1"/>
    <property type="molecule type" value="mRNA"/>
</dbReference>
<dbReference type="EMBL" id="BC048617">
    <property type="protein sequence ID" value="AAH48617.1"/>
    <property type="molecule type" value="mRNA"/>
</dbReference>
<dbReference type="CCDS" id="CCDS25519.1"/>
<dbReference type="RefSeq" id="NP_001343401.1">
    <property type="nucleotide sequence ID" value="NM_001356472.2"/>
</dbReference>
<dbReference type="RefSeq" id="NP_081359.1">
    <property type="nucleotide sequence ID" value="NM_027083.3"/>
</dbReference>
<dbReference type="RefSeq" id="XP_006534178.1">
    <property type="nucleotide sequence ID" value="XM_006534115.3"/>
</dbReference>
<dbReference type="SMR" id="Q9DA11"/>
<dbReference type="FunCoup" id="Q9DA11">
    <property type="interactions" value="16"/>
</dbReference>
<dbReference type="STRING" id="10090.ENSMUSP00000021328"/>
<dbReference type="CAZy" id="GH22">
    <property type="family name" value="Glycoside Hydrolase Family 22"/>
</dbReference>
<dbReference type="GlyCosmos" id="Q9DA11">
    <property type="glycosylation" value="1 site, No reported glycans"/>
</dbReference>
<dbReference type="GlyGen" id="Q9DA11">
    <property type="glycosylation" value="1 site"/>
</dbReference>
<dbReference type="PhosphoSitePlus" id="Q9DA11"/>
<dbReference type="PaxDb" id="10090-ENSMUSP00000021328"/>
<dbReference type="PeptideAtlas" id="Q9DA11"/>
<dbReference type="ProteomicsDB" id="290207"/>
<dbReference type="Antibodypedia" id="72609">
    <property type="antibodies" value="156 antibodies from 24 providers"/>
</dbReference>
<dbReference type="DNASU" id="69444"/>
<dbReference type="Ensembl" id="ENSMUST00000021328.8">
    <property type="protein sequence ID" value="ENSMUSP00000021328.8"/>
    <property type="gene ID" value="ENSMUSG00000020945.14"/>
</dbReference>
<dbReference type="Ensembl" id="ENSMUST00000107014.8">
    <property type="protein sequence ID" value="ENSMUSP00000102628.2"/>
    <property type="gene ID" value="ENSMUSG00000020945.14"/>
</dbReference>
<dbReference type="GeneID" id="69444"/>
<dbReference type="KEGG" id="mmu:69444"/>
<dbReference type="UCSC" id="uc007lvl.1">
    <property type="organism name" value="mouse"/>
</dbReference>
<dbReference type="AGR" id="MGI:1916694"/>
<dbReference type="CTD" id="57151"/>
<dbReference type="MGI" id="MGI:1916694">
    <property type="gene designation" value="Lyzl6"/>
</dbReference>
<dbReference type="VEuPathDB" id="HostDB:ENSMUSG00000020945"/>
<dbReference type="eggNOG" id="ENOG502SCGK">
    <property type="taxonomic scope" value="Eukaryota"/>
</dbReference>
<dbReference type="GeneTree" id="ENSGT00940000161690"/>
<dbReference type="HOGENOM" id="CLU_111620_1_1_1"/>
<dbReference type="InParanoid" id="Q9DA11"/>
<dbReference type="OMA" id="EWRLHCA"/>
<dbReference type="OrthoDB" id="17373at2759"/>
<dbReference type="PhylomeDB" id="Q9DA11"/>
<dbReference type="TreeFam" id="TF324882"/>
<dbReference type="BioGRID-ORCS" id="69444">
    <property type="hits" value="1 hit in 76 CRISPR screens"/>
</dbReference>
<dbReference type="PRO" id="PR:Q9DA11"/>
<dbReference type="Proteomes" id="UP000000589">
    <property type="component" value="Chromosome 11"/>
</dbReference>
<dbReference type="RNAct" id="Q9DA11">
    <property type="molecule type" value="protein"/>
</dbReference>
<dbReference type="Bgee" id="ENSMUSG00000020945">
    <property type="expression patterns" value="Expressed in spermatid and 20 other cell types or tissues"/>
</dbReference>
<dbReference type="ExpressionAtlas" id="Q9DA11">
    <property type="expression patterns" value="baseline and differential"/>
</dbReference>
<dbReference type="GO" id="GO:0009986">
    <property type="term" value="C:cell surface"/>
    <property type="evidence" value="ECO:0007669"/>
    <property type="project" value="UniProtKB-SubCell"/>
</dbReference>
<dbReference type="GO" id="GO:0005576">
    <property type="term" value="C:extracellular region"/>
    <property type="evidence" value="ECO:0007669"/>
    <property type="project" value="UniProtKB-SubCell"/>
</dbReference>
<dbReference type="GO" id="GO:0097225">
    <property type="term" value="C:sperm midpiece"/>
    <property type="evidence" value="ECO:0000314"/>
    <property type="project" value="UniProtKB"/>
</dbReference>
<dbReference type="GO" id="GO:0097524">
    <property type="term" value="C:sperm plasma membrane"/>
    <property type="evidence" value="ECO:0000250"/>
    <property type="project" value="UniProtKB"/>
</dbReference>
<dbReference type="GO" id="GO:0003796">
    <property type="term" value="F:lysozyme activity"/>
    <property type="evidence" value="ECO:0007669"/>
    <property type="project" value="UniProtKB-EC"/>
</dbReference>
<dbReference type="GO" id="GO:0042742">
    <property type="term" value="P:defense response to bacterium"/>
    <property type="evidence" value="ECO:0000250"/>
    <property type="project" value="UniProtKB"/>
</dbReference>
<dbReference type="GO" id="GO:0009566">
    <property type="term" value="P:fertilization"/>
    <property type="evidence" value="ECO:0000250"/>
    <property type="project" value="UniProtKB"/>
</dbReference>
<dbReference type="GO" id="GO:0007342">
    <property type="term" value="P:fusion of sperm to egg plasma membrane involved in single fertilization"/>
    <property type="evidence" value="ECO:0000250"/>
    <property type="project" value="UniProtKB"/>
</dbReference>
<dbReference type="GO" id="GO:0031640">
    <property type="term" value="P:killing of cells of another organism"/>
    <property type="evidence" value="ECO:0007669"/>
    <property type="project" value="UniProtKB-KW"/>
</dbReference>
<dbReference type="CDD" id="cd16897">
    <property type="entry name" value="LYZ_C"/>
    <property type="match status" value="1"/>
</dbReference>
<dbReference type="FunFam" id="1.10.530.10:FF:000001">
    <property type="entry name" value="Lysozyme C"/>
    <property type="match status" value="1"/>
</dbReference>
<dbReference type="Gene3D" id="1.10.530.10">
    <property type="match status" value="1"/>
</dbReference>
<dbReference type="InterPro" id="IPR001916">
    <property type="entry name" value="Glyco_hydro_22"/>
</dbReference>
<dbReference type="InterPro" id="IPR019799">
    <property type="entry name" value="Glyco_hydro_22_CS"/>
</dbReference>
<dbReference type="InterPro" id="IPR000974">
    <property type="entry name" value="Glyco_hydro_22_lys"/>
</dbReference>
<dbReference type="InterPro" id="IPR023346">
    <property type="entry name" value="Lysozyme-like_dom_sf"/>
</dbReference>
<dbReference type="PANTHER" id="PTHR11407">
    <property type="entry name" value="LYSOZYME C"/>
    <property type="match status" value="1"/>
</dbReference>
<dbReference type="PANTHER" id="PTHR11407:SF9">
    <property type="entry name" value="LYSOZYME-LIKE PROTEIN 6"/>
    <property type="match status" value="1"/>
</dbReference>
<dbReference type="Pfam" id="PF00062">
    <property type="entry name" value="Lys"/>
    <property type="match status" value="1"/>
</dbReference>
<dbReference type="PRINTS" id="PR00137">
    <property type="entry name" value="LYSOZYME"/>
</dbReference>
<dbReference type="PRINTS" id="PR00135">
    <property type="entry name" value="LYZLACT"/>
</dbReference>
<dbReference type="SMART" id="SM00263">
    <property type="entry name" value="LYZ1"/>
    <property type="match status" value="1"/>
</dbReference>
<dbReference type="SUPFAM" id="SSF53955">
    <property type="entry name" value="Lysozyme-like"/>
    <property type="match status" value="1"/>
</dbReference>
<dbReference type="PROSITE" id="PS00128">
    <property type="entry name" value="GLYCOSYL_HYDROL_F22_1"/>
    <property type="match status" value="1"/>
</dbReference>
<dbReference type="PROSITE" id="PS51348">
    <property type="entry name" value="GLYCOSYL_HYDROL_F22_2"/>
    <property type="match status" value="1"/>
</dbReference>
<comment type="function">
    <text evidence="1">May be involved sperm-egg plasma membrane adhesion and fusion during fertilization. Exhibits bacteriolytic activity in vitro against Micrococcus luteus and Staphylococcus aureus. Shows weak bacteriolytic activity against Gram-positive bacteria at physiological pH. Bacteriolytic activity is pH-dependent, with a maximum at around pH 5.6 (By similarity).</text>
</comment>
<comment type="catalytic activity">
    <reaction>
        <text>Hydrolysis of (1-&gt;4)-beta-linkages between N-acetylmuramic acid and N-acetyl-D-glucosamine residues in a peptidoglycan and between N-acetyl-D-glucosamine residues in chitodextrins.</text>
        <dbReference type="EC" id="3.2.1.17"/>
    </reaction>
</comment>
<comment type="subunit">
    <text evidence="5">Monomer.</text>
</comment>
<comment type="subcellular location">
    <subcellularLocation>
        <location evidence="1">Secreted</location>
    </subcellularLocation>
    <subcellularLocation>
        <location evidence="1">Cell surface</location>
    </subcellularLocation>
    <subcellularLocation>
        <location evidence="4">Cell projection</location>
        <location evidence="4">Cilium</location>
        <location evidence="4">Flagellum</location>
    </subcellularLocation>
    <text evidence="4">Detected in the postacrosomal area and midpiece of mature spermatozoa (PubMed:24013621).</text>
</comment>
<comment type="tissue specificity">
    <text evidence="4">Expressed strongly in testis and epididymis and weakly in seminal vesicle, vas deferens, kidney and spleen (PubMed:24013621). Highly expressed in primary spermatocytes and round spermatids (at protein level) (PubMed:24013621).</text>
</comment>
<comment type="developmental stage">
    <text evidence="4">In testis expressed from day 21 during postnatal development (PubMed:24013621). In the epidydimis, first detected at day 28 and high expression is maintained until day 35. Thereafter, level declines gradually (PubMed:24013621).</text>
</comment>
<comment type="similarity">
    <text evidence="3">Belongs to the glycosyl hydrolase 22 family.</text>
</comment>
<reference key="1">
    <citation type="submission" date="2004-03" db="EMBL/GenBank/DDBJ databases">
        <authorList>
            <person name="Zhang K."/>
            <person name="Dang Y."/>
            <person name="Yu L."/>
        </authorList>
    </citation>
    <scope>NUCLEOTIDE SEQUENCE [MRNA]</scope>
    <source>
        <tissue>Testis</tissue>
    </source>
</reference>
<reference key="2">
    <citation type="journal article" date="2005" name="Science">
        <title>The transcriptional landscape of the mammalian genome.</title>
        <authorList>
            <person name="Carninci P."/>
            <person name="Kasukawa T."/>
            <person name="Katayama S."/>
            <person name="Gough J."/>
            <person name="Frith M.C."/>
            <person name="Maeda N."/>
            <person name="Oyama R."/>
            <person name="Ravasi T."/>
            <person name="Lenhard B."/>
            <person name="Wells C."/>
            <person name="Kodzius R."/>
            <person name="Shimokawa K."/>
            <person name="Bajic V.B."/>
            <person name="Brenner S.E."/>
            <person name="Batalov S."/>
            <person name="Forrest A.R."/>
            <person name="Zavolan M."/>
            <person name="Davis M.J."/>
            <person name="Wilming L.G."/>
            <person name="Aidinis V."/>
            <person name="Allen J.E."/>
            <person name="Ambesi-Impiombato A."/>
            <person name="Apweiler R."/>
            <person name="Aturaliya R.N."/>
            <person name="Bailey T.L."/>
            <person name="Bansal M."/>
            <person name="Baxter L."/>
            <person name="Beisel K.W."/>
            <person name="Bersano T."/>
            <person name="Bono H."/>
            <person name="Chalk A.M."/>
            <person name="Chiu K.P."/>
            <person name="Choudhary V."/>
            <person name="Christoffels A."/>
            <person name="Clutterbuck D.R."/>
            <person name="Crowe M.L."/>
            <person name="Dalla E."/>
            <person name="Dalrymple B.P."/>
            <person name="de Bono B."/>
            <person name="Della Gatta G."/>
            <person name="di Bernardo D."/>
            <person name="Down T."/>
            <person name="Engstrom P."/>
            <person name="Fagiolini M."/>
            <person name="Faulkner G."/>
            <person name="Fletcher C.F."/>
            <person name="Fukushima T."/>
            <person name="Furuno M."/>
            <person name="Futaki S."/>
            <person name="Gariboldi M."/>
            <person name="Georgii-Hemming P."/>
            <person name="Gingeras T.R."/>
            <person name="Gojobori T."/>
            <person name="Green R.E."/>
            <person name="Gustincich S."/>
            <person name="Harbers M."/>
            <person name="Hayashi Y."/>
            <person name="Hensch T.K."/>
            <person name="Hirokawa N."/>
            <person name="Hill D."/>
            <person name="Huminiecki L."/>
            <person name="Iacono M."/>
            <person name="Ikeo K."/>
            <person name="Iwama A."/>
            <person name="Ishikawa T."/>
            <person name="Jakt M."/>
            <person name="Kanapin A."/>
            <person name="Katoh M."/>
            <person name="Kawasawa Y."/>
            <person name="Kelso J."/>
            <person name="Kitamura H."/>
            <person name="Kitano H."/>
            <person name="Kollias G."/>
            <person name="Krishnan S.P."/>
            <person name="Kruger A."/>
            <person name="Kummerfeld S.K."/>
            <person name="Kurochkin I.V."/>
            <person name="Lareau L.F."/>
            <person name="Lazarevic D."/>
            <person name="Lipovich L."/>
            <person name="Liu J."/>
            <person name="Liuni S."/>
            <person name="McWilliam S."/>
            <person name="Madan Babu M."/>
            <person name="Madera M."/>
            <person name="Marchionni L."/>
            <person name="Matsuda H."/>
            <person name="Matsuzawa S."/>
            <person name="Miki H."/>
            <person name="Mignone F."/>
            <person name="Miyake S."/>
            <person name="Morris K."/>
            <person name="Mottagui-Tabar S."/>
            <person name="Mulder N."/>
            <person name="Nakano N."/>
            <person name="Nakauchi H."/>
            <person name="Ng P."/>
            <person name="Nilsson R."/>
            <person name="Nishiguchi S."/>
            <person name="Nishikawa S."/>
            <person name="Nori F."/>
            <person name="Ohara O."/>
            <person name="Okazaki Y."/>
            <person name="Orlando V."/>
            <person name="Pang K.C."/>
            <person name="Pavan W.J."/>
            <person name="Pavesi G."/>
            <person name="Pesole G."/>
            <person name="Petrovsky N."/>
            <person name="Piazza S."/>
            <person name="Reed J."/>
            <person name="Reid J.F."/>
            <person name="Ring B.Z."/>
            <person name="Ringwald M."/>
            <person name="Rost B."/>
            <person name="Ruan Y."/>
            <person name="Salzberg S.L."/>
            <person name="Sandelin A."/>
            <person name="Schneider C."/>
            <person name="Schoenbach C."/>
            <person name="Sekiguchi K."/>
            <person name="Semple C.A."/>
            <person name="Seno S."/>
            <person name="Sessa L."/>
            <person name="Sheng Y."/>
            <person name="Shibata Y."/>
            <person name="Shimada H."/>
            <person name="Shimada K."/>
            <person name="Silva D."/>
            <person name="Sinclair B."/>
            <person name="Sperling S."/>
            <person name="Stupka E."/>
            <person name="Sugiura K."/>
            <person name="Sultana R."/>
            <person name="Takenaka Y."/>
            <person name="Taki K."/>
            <person name="Tammoja K."/>
            <person name="Tan S.L."/>
            <person name="Tang S."/>
            <person name="Taylor M.S."/>
            <person name="Tegner J."/>
            <person name="Teichmann S.A."/>
            <person name="Ueda H.R."/>
            <person name="van Nimwegen E."/>
            <person name="Verardo R."/>
            <person name="Wei C.L."/>
            <person name="Yagi K."/>
            <person name="Yamanishi H."/>
            <person name="Zabarovsky E."/>
            <person name="Zhu S."/>
            <person name="Zimmer A."/>
            <person name="Hide W."/>
            <person name="Bult C."/>
            <person name="Grimmond S.M."/>
            <person name="Teasdale R.D."/>
            <person name="Liu E.T."/>
            <person name="Brusic V."/>
            <person name="Quackenbush J."/>
            <person name="Wahlestedt C."/>
            <person name="Mattick J.S."/>
            <person name="Hume D.A."/>
            <person name="Kai C."/>
            <person name="Sasaki D."/>
            <person name="Tomaru Y."/>
            <person name="Fukuda S."/>
            <person name="Kanamori-Katayama M."/>
            <person name="Suzuki M."/>
            <person name="Aoki J."/>
            <person name="Arakawa T."/>
            <person name="Iida J."/>
            <person name="Imamura K."/>
            <person name="Itoh M."/>
            <person name="Kato T."/>
            <person name="Kawaji H."/>
            <person name="Kawagashira N."/>
            <person name="Kawashima T."/>
            <person name="Kojima M."/>
            <person name="Kondo S."/>
            <person name="Konno H."/>
            <person name="Nakano K."/>
            <person name="Ninomiya N."/>
            <person name="Nishio T."/>
            <person name="Okada M."/>
            <person name="Plessy C."/>
            <person name="Shibata K."/>
            <person name="Shiraki T."/>
            <person name="Suzuki S."/>
            <person name="Tagami M."/>
            <person name="Waki K."/>
            <person name="Watahiki A."/>
            <person name="Okamura-Oho Y."/>
            <person name="Suzuki H."/>
            <person name="Kawai J."/>
            <person name="Hayashizaki Y."/>
        </authorList>
    </citation>
    <scope>NUCLEOTIDE SEQUENCE [LARGE SCALE MRNA]</scope>
    <source>
        <strain>C57BL/6J</strain>
        <tissue>Testis</tissue>
    </source>
</reference>
<reference key="3">
    <citation type="journal article" date="2004" name="Genome Res.">
        <title>The status, quality, and expansion of the NIH full-length cDNA project: the Mammalian Gene Collection (MGC).</title>
        <authorList>
            <consortium name="The MGC Project Team"/>
        </authorList>
    </citation>
    <scope>NUCLEOTIDE SEQUENCE [LARGE SCALE MRNA]</scope>
    <source>
        <tissue>Testis</tissue>
    </source>
</reference>
<reference key="4">
    <citation type="journal article" date="2010" name="Cell">
        <title>A tissue-specific atlas of mouse protein phosphorylation and expression.</title>
        <authorList>
            <person name="Huttlin E.L."/>
            <person name="Jedrychowski M.P."/>
            <person name="Elias J.E."/>
            <person name="Goswami T."/>
            <person name="Rad R."/>
            <person name="Beausoleil S.A."/>
            <person name="Villen J."/>
            <person name="Haas W."/>
            <person name="Sowa M.E."/>
            <person name="Gygi S.P."/>
        </authorList>
    </citation>
    <scope>IDENTIFICATION BY MASS SPECTROMETRY [LARGE SCALE ANALYSIS]</scope>
    <source>
        <tissue>Testis</tissue>
    </source>
</reference>
<reference key="5">
    <citation type="journal article" date="2013" name="Asian J. Androl.">
        <title>Characterisation of Lyzls in mice and antibacterial properties of human LYZL6.</title>
        <authorList>
            <person name="Wei J."/>
            <person name="Li S.J."/>
            <person name="Shi H."/>
            <person name="Wang H.Y."/>
            <person name="Rong C.T."/>
            <person name="Zhu P."/>
            <person name="Jin S.H."/>
            <person name="Liu J."/>
            <person name="Li J.Y."/>
        </authorList>
    </citation>
    <scope>TISSUE SPECIFICITY</scope>
    <scope>DEVELOPMENTAL STAGE</scope>
    <scope>SUBCELLULAR LOCATION</scope>
</reference>
<accession>Q9DA11</accession>
<organism>
    <name type="scientific">Mus musculus</name>
    <name type="common">Mouse</name>
    <dbReference type="NCBI Taxonomy" id="10090"/>
    <lineage>
        <taxon>Eukaryota</taxon>
        <taxon>Metazoa</taxon>
        <taxon>Chordata</taxon>
        <taxon>Craniata</taxon>
        <taxon>Vertebrata</taxon>
        <taxon>Euteleostomi</taxon>
        <taxon>Mammalia</taxon>
        <taxon>Eutheria</taxon>
        <taxon>Euarchontoglires</taxon>
        <taxon>Glires</taxon>
        <taxon>Rodentia</taxon>
        <taxon>Myomorpha</taxon>
        <taxon>Muroidea</taxon>
        <taxon>Muridae</taxon>
        <taxon>Murinae</taxon>
        <taxon>Mus</taxon>
        <taxon>Mus</taxon>
    </lineage>
</organism>
<proteinExistence type="evidence at protein level"/>
<gene>
    <name type="primary">Lyzl6</name>
    <name type="synonym">Lyc1</name>
</gene>
<feature type="signal peptide" evidence="2">
    <location>
        <begin position="1"/>
        <end position="19"/>
    </location>
</feature>
<feature type="chain" id="PRO_0000240641" description="Lysozyme-like protein 6">
    <location>
        <begin position="20"/>
        <end position="148"/>
    </location>
</feature>
<feature type="domain" description="C-type lysozyme" evidence="3">
    <location>
        <begin position="20"/>
        <end position="148"/>
    </location>
</feature>
<feature type="active site" evidence="3">
    <location>
        <position position="54"/>
    </location>
</feature>
<feature type="active site" evidence="3">
    <location>
        <position position="71"/>
    </location>
</feature>
<feature type="glycosylation site" description="N-linked (GlcNAc...) asparagine" evidence="2">
    <location>
        <position position="58"/>
    </location>
</feature>
<feature type="disulfide bond" evidence="3">
    <location>
        <begin position="25"/>
        <end position="145"/>
    </location>
</feature>
<feature type="disulfide bond" evidence="3">
    <location>
        <begin position="49"/>
        <end position="133"/>
    </location>
</feature>
<feature type="disulfide bond" evidence="3">
    <location>
        <begin position="83"/>
        <end position="98"/>
    </location>
</feature>
<feature type="disulfide bond" evidence="3">
    <location>
        <begin position="94"/>
        <end position="112"/>
    </location>
</feature>